<sequence>MRPLPSQLPIPLSPEGYGRFAVEFYKRVAVGILGENLVLSPYSVYKAFAMAYAGASGATREELKAVFGFGEDPCVLPAASRGVEEALSAWLQTDFPFKPNYLNKLRCIGAEAKYVDFERDYKSAIAAINKWAEEKTRGLIKDLVPADYPEGWDVRAVLVSALYFKGNWWPDRFQRVGKREFKGAGPADFIALDLSSCGDPSLRGRASSDLTVVELPFNNTEVALYIIMPRDLPSFVKELTYEKLREIISTLPDQVIRVEMPLFKAEFKGSVKQALREMGVVRAFETADFTEMAYRRLYIDDVFHGAYLNADENGVVAAAATAVVFKPVCAKGGGVEVVVDKPFLFVLADRTSGVIYFIGHVVNPSPGFTPT</sequence>
<keyword id="KW-0646">Protease inhibitor</keyword>
<keyword id="KW-1185">Reference proteome</keyword>
<keyword id="KW-0722">Serine protease inhibitor</keyword>
<proteinExistence type="inferred from homology"/>
<reference key="1">
    <citation type="journal article" date="2002" name="Proc. Natl. Acad. Sci. U.S.A.">
        <title>Genome sequence of the hyperthermophilic crenarchaeon Pyrobaculum aerophilum.</title>
        <authorList>
            <person name="Fitz-Gibbon S.T."/>
            <person name="Ladner H."/>
            <person name="Kim U.-J."/>
            <person name="Stetter K.O."/>
            <person name="Simon M.I."/>
            <person name="Miller J.H."/>
        </authorList>
    </citation>
    <scope>NUCLEOTIDE SEQUENCE [LARGE SCALE GENOMIC DNA]</scope>
    <source>
        <strain>ATCC 51768 / DSM 7523 / JCM 9630 / CIP 104966 / NBRC 100827 / IM2</strain>
    </source>
</reference>
<accession>Q8ZZW3</accession>
<evidence type="ECO:0000255" key="1"/>
<evidence type="ECO:0000305" key="2"/>
<name>Y049_PYRAE</name>
<gene>
    <name type="ordered locus">PAE0049</name>
</gene>
<comment type="similarity">
    <text evidence="2">Belongs to the serpin family.</text>
</comment>
<comment type="sequence caution" evidence="2">
    <conflict type="erroneous initiation">
        <sequence resource="EMBL-CDS" id="AAL62526"/>
    </conflict>
</comment>
<protein>
    <recommendedName>
        <fullName>Uncharacterized serpin-like protein PAE0049</fullName>
    </recommendedName>
</protein>
<organism>
    <name type="scientific">Pyrobaculum aerophilum (strain ATCC 51768 / DSM 7523 / JCM 9630 / CIP 104966 / NBRC 100827 / IM2)</name>
    <dbReference type="NCBI Taxonomy" id="178306"/>
    <lineage>
        <taxon>Archaea</taxon>
        <taxon>Thermoproteota</taxon>
        <taxon>Thermoprotei</taxon>
        <taxon>Thermoproteales</taxon>
        <taxon>Thermoproteaceae</taxon>
        <taxon>Pyrobaculum</taxon>
    </lineage>
</organism>
<dbReference type="EMBL" id="AE009441">
    <property type="protein sequence ID" value="AAL62526.1"/>
    <property type="status" value="ALT_INIT"/>
    <property type="molecule type" value="Genomic_DNA"/>
</dbReference>
<dbReference type="SMR" id="Q8ZZW3"/>
<dbReference type="STRING" id="178306.PAE0049"/>
<dbReference type="MEROPS" id="I04.079"/>
<dbReference type="EnsemblBacteria" id="AAL62526">
    <property type="protein sequence ID" value="AAL62526"/>
    <property type="gene ID" value="PAE0049"/>
</dbReference>
<dbReference type="KEGG" id="pai:PAE0049"/>
<dbReference type="PATRIC" id="fig|178306.9.peg.35"/>
<dbReference type="eggNOG" id="arCOG04933">
    <property type="taxonomic scope" value="Archaea"/>
</dbReference>
<dbReference type="HOGENOM" id="CLU_023330_0_4_2"/>
<dbReference type="InParanoid" id="Q8ZZW3"/>
<dbReference type="Proteomes" id="UP000002439">
    <property type="component" value="Chromosome"/>
</dbReference>
<dbReference type="GO" id="GO:0005615">
    <property type="term" value="C:extracellular space"/>
    <property type="evidence" value="ECO:0000318"/>
    <property type="project" value="GO_Central"/>
</dbReference>
<dbReference type="GO" id="GO:0004867">
    <property type="term" value="F:serine-type endopeptidase inhibitor activity"/>
    <property type="evidence" value="ECO:0007669"/>
    <property type="project" value="UniProtKB-KW"/>
</dbReference>
<dbReference type="Gene3D" id="2.30.39.10">
    <property type="entry name" value="Alpha-1-antitrypsin, domain 1"/>
    <property type="match status" value="1"/>
</dbReference>
<dbReference type="Gene3D" id="3.30.497.10">
    <property type="entry name" value="Antithrombin, subunit I, domain 2"/>
    <property type="match status" value="1"/>
</dbReference>
<dbReference type="InterPro" id="IPR023795">
    <property type="entry name" value="Serpin_CS"/>
</dbReference>
<dbReference type="InterPro" id="IPR023796">
    <property type="entry name" value="Serpin_dom"/>
</dbReference>
<dbReference type="InterPro" id="IPR000215">
    <property type="entry name" value="Serpin_fam"/>
</dbReference>
<dbReference type="InterPro" id="IPR036186">
    <property type="entry name" value="Serpin_sf"/>
</dbReference>
<dbReference type="InterPro" id="IPR042178">
    <property type="entry name" value="Serpin_sf_1"/>
</dbReference>
<dbReference type="InterPro" id="IPR042185">
    <property type="entry name" value="Serpin_sf_2"/>
</dbReference>
<dbReference type="PANTHER" id="PTHR11461:SF211">
    <property type="entry name" value="GH10112P-RELATED"/>
    <property type="match status" value="1"/>
</dbReference>
<dbReference type="PANTHER" id="PTHR11461">
    <property type="entry name" value="SERINE PROTEASE INHIBITOR, SERPIN"/>
    <property type="match status" value="1"/>
</dbReference>
<dbReference type="Pfam" id="PF00079">
    <property type="entry name" value="Serpin"/>
    <property type="match status" value="1"/>
</dbReference>
<dbReference type="SMART" id="SM00093">
    <property type="entry name" value="SERPIN"/>
    <property type="match status" value="1"/>
</dbReference>
<dbReference type="SUPFAM" id="SSF56574">
    <property type="entry name" value="Serpins"/>
    <property type="match status" value="1"/>
</dbReference>
<dbReference type="PROSITE" id="PS00284">
    <property type="entry name" value="SERPIN"/>
    <property type="match status" value="1"/>
</dbReference>
<feature type="chain" id="PRO_0000094164" description="Uncharacterized serpin-like protein PAE0049">
    <location>
        <begin position="1"/>
        <end position="371"/>
    </location>
</feature>
<feature type="site" description="Reactive bond" evidence="1">
    <location>
        <begin position="328"/>
        <end position="329"/>
    </location>
</feature>